<dbReference type="EMBL" id="Y00453">
    <property type="protein sequence ID" value="CAA68508.1"/>
    <property type="molecule type" value="Genomic_DNA"/>
</dbReference>
<dbReference type="PIR" id="A26987">
    <property type="entry name" value="WMBEK8"/>
</dbReference>
<dbReference type="SMR" id="P12835"/>
<dbReference type="GO" id="GO:0042025">
    <property type="term" value="C:host cell nucleus"/>
    <property type="evidence" value="ECO:0007669"/>
    <property type="project" value="UniProtKB-SubCell"/>
</dbReference>
<dbReference type="GO" id="GO:0005524">
    <property type="term" value="F:ATP binding"/>
    <property type="evidence" value="ECO:0007669"/>
    <property type="project" value="UniProtKB-KW"/>
</dbReference>
<dbReference type="GO" id="GO:0008270">
    <property type="term" value="F:zinc ion binding"/>
    <property type="evidence" value="ECO:0007669"/>
    <property type="project" value="UniProtKB-KW"/>
</dbReference>
<dbReference type="GO" id="GO:0019073">
    <property type="term" value="P:viral DNA genome packaging"/>
    <property type="evidence" value="ECO:0007669"/>
    <property type="project" value="InterPro"/>
</dbReference>
<dbReference type="HAMAP" id="MF_04014">
    <property type="entry name" value="HSV_TRM1"/>
    <property type="match status" value="1"/>
</dbReference>
<dbReference type="InterPro" id="IPR000501">
    <property type="entry name" value="UL28/UL56"/>
</dbReference>
<dbReference type="Pfam" id="PF01366">
    <property type="entry name" value="PRTP"/>
    <property type="match status" value="1"/>
</dbReference>
<evidence type="ECO:0000255" key="1">
    <source>
        <dbReference type="HAMAP-Rule" id="MF_04014"/>
    </source>
</evidence>
<evidence type="ECO:0000256" key="2">
    <source>
        <dbReference type="SAM" id="MobiDB-lite"/>
    </source>
</evidence>
<accession>P12835</accession>
<comment type="function">
    <text evidence="1">Component of the molecular motor that translocates viral genomic DNA in empty capsid during DNA packaging. Forms a tripartite terminase complex together with TRM2 and TRM3 in the host cytoplasm. Once the complex reaches the host nucleus, it interacts with the capsid portal vertex. This portal forms a ring in which genomic DNA is translocated into the capsid. TRM1 carries an endonuclease activity that plays an important role for the cleavage of concatemeric viral DNA into unit length genomes.</text>
</comment>
<comment type="subunit">
    <text evidence="1">Associates with TRM2 and TRM3 to form the tripartite terminase complex. Interacts with portal protein.</text>
</comment>
<comment type="subcellular location">
    <subcellularLocation>
        <location evidence="1">Host nucleus</location>
    </subcellularLocation>
    <text evidence="1">Found associated with the external surface of the viral capsid during assembly and DNA packaging, but seems absent in extracellular mature virions.</text>
</comment>
<comment type="similarity">
    <text evidence="1">Belongs to the herpesviridae TRM1 protein family.</text>
</comment>
<keyword id="KW-0067">ATP-binding</keyword>
<keyword id="KW-1048">Host nucleus</keyword>
<keyword id="KW-0426">Late protein</keyword>
<keyword id="KW-0479">Metal-binding</keyword>
<keyword id="KW-0547">Nucleotide-binding</keyword>
<keyword id="KW-0231">Viral genome packaging</keyword>
<keyword id="KW-1188">Viral release from host cell</keyword>
<keyword id="KW-0862">Zinc</keyword>
<keyword id="KW-0863">Zinc-finger</keyword>
<proteinExistence type="inferred from homology"/>
<sequence>MAAPVSEPTVARQKLLALLGQVQTYVFQIELLRRCDPHIGRGKLPQLKLNALQVRALRRRLRPGLEAQAGAFLTPLSVTLELLLEYAWREGERLLGSLETFATAGDVAAFFTETMGLARPCPYHQRVRLDTYGGTVHMELCFLHDVENFLKQLNYCHLITPSRGATAALERVREFMVGAVGSGLIVPPELSDPSHPCAVCFEELCVTANQGATIARRLADRICNHVTQQAQVRLDANELRRYLPHAAGLSDADRARALSVLDHALARTAGGDGQPHPSPENDSVRKEADALLEAHDVFQATTPGLYAISELRFWLASGDRAGQTTMDAFASNLTALARRELQQETAAVAVELALFGRRAEHFDRAFGSHLAALDMVDALIIGGQATSPDDQIEALIRACYDHHLTTPLLRRLVSPEQCDEEALRRVLARMGAGGAADAPKGGAGPDDDGDRVAVEEGTRGLGAPGGGGEDEDRRRGPGGQGPETWGDIATQAAADVRERRRLYADRLTKRSLASLGRCVREQRGELEKMLRVSVHGEVLPATFAAVANGFAARARFCALTAGAGTVIDNRSAPGVFDAHRFMRASLLRHQVDPALLPSITHRFFELVNGPLFDHSTHSFAQPPNTALYYSVENVGLLPHLKEELARFIMGAGGSGADWAVSEFQRFYCFDGISGITPTQRAAWRYIRELIIATTLFASVYRCGELELRRPDCSRPTSEGRYRYPPGVYLTYDSDCPLVAIVESAPDGCIGPRSVVVYDRDVFSILYSVLQHLAPRLPDGGHDGPP</sequence>
<organism>
    <name type="scientific">Human herpesvirus 1 (strain Angelotti)</name>
    <name type="common">HHV-1</name>
    <name type="synonym">Human herpes simplex virus 1</name>
    <dbReference type="NCBI Taxonomy" id="10301"/>
    <lineage>
        <taxon>Viruses</taxon>
        <taxon>Duplodnaviria</taxon>
        <taxon>Heunggongvirae</taxon>
        <taxon>Peploviricota</taxon>
        <taxon>Herviviricetes</taxon>
        <taxon>Herpesvirales</taxon>
        <taxon>Orthoherpesviridae</taxon>
        <taxon>Alphaherpesvirinae</taxon>
        <taxon>Simplexvirus</taxon>
        <taxon>Simplexvirus humanalpha1</taxon>
        <taxon>Human herpesvirus 1</taxon>
    </lineage>
</organism>
<name>TRM1_HHV1A</name>
<feature type="chain" id="PRO_0000115875" description="Tripartite terminase subunit 1">
    <location>
        <begin position="1"/>
        <end position="785"/>
    </location>
</feature>
<feature type="zinc finger region" description="C3H1-type" evidence="1">
    <location>
        <begin position="197"/>
        <end position="225"/>
    </location>
</feature>
<feature type="region of interest" description="Disordered" evidence="2">
    <location>
        <begin position="433"/>
        <end position="489"/>
    </location>
</feature>
<feature type="binding site" evidence="1">
    <location>
        <begin position="696"/>
        <end position="703"/>
    </location>
    <ligand>
        <name>ATP</name>
        <dbReference type="ChEBI" id="CHEBI:30616"/>
    </ligand>
</feature>
<organismHost>
    <name type="scientific">Homo sapiens</name>
    <name type="common">Human</name>
    <dbReference type="NCBI Taxonomy" id="9606"/>
</organismHost>
<protein>
    <recommendedName>
        <fullName evidence="1">Tripartite terminase subunit 1</fullName>
    </recommendedName>
</protein>
<gene>
    <name evidence="1" type="primary">TRM1</name>
    <name type="ordered locus">UL28</name>
</gene>
<reference key="1">
    <citation type="journal article" date="1987" name="Nucleic Acids Res.">
        <title>The nucleotide sequence of the herpes simplex virus type 1 late gene ICP18.5 of strain Angelotti.</title>
        <authorList>
            <person name="Knopf C.W."/>
        </authorList>
    </citation>
    <scope>NUCLEOTIDE SEQUENCE [GENOMIC DNA]</scope>
</reference>